<protein>
    <recommendedName>
        <fullName evidence="1">Pyridoxine 5'-phosphate synthase</fullName>
        <shortName evidence="1">PNP synthase</shortName>
        <ecNumber evidence="1">2.6.99.2</ecNumber>
    </recommendedName>
</protein>
<evidence type="ECO:0000255" key="1">
    <source>
        <dbReference type="HAMAP-Rule" id="MF_00279"/>
    </source>
</evidence>
<comment type="function">
    <text evidence="1">Catalyzes the complicated ring closure reaction between the two acyclic compounds 1-deoxy-D-xylulose-5-phosphate (DXP) and 3-amino-2-oxopropyl phosphate (1-amino-acetone-3-phosphate or AAP) to form pyridoxine 5'-phosphate (PNP) and inorganic phosphate.</text>
</comment>
<comment type="catalytic activity">
    <reaction evidence="1">
        <text>3-amino-2-oxopropyl phosphate + 1-deoxy-D-xylulose 5-phosphate = pyridoxine 5'-phosphate + phosphate + 2 H2O + H(+)</text>
        <dbReference type="Rhea" id="RHEA:15265"/>
        <dbReference type="ChEBI" id="CHEBI:15377"/>
        <dbReference type="ChEBI" id="CHEBI:15378"/>
        <dbReference type="ChEBI" id="CHEBI:43474"/>
        <dbReference type="ChEBI" id="CHEBI:57279"/>
        <dbReference type="ChEBI" id="CHEBI:57792"/>
        <dbReference type="ChEBI" id="CHEBI:58589"/>
        <dbReference type="EC" id="2.6.99.2"/>
    </reaction>
</comment>
<comment type="pathway">
    <text evidence="1">Cofactor biosynthesis; pyridoxine 5'-phosphate biosynthesis; pyridoxine 5'-phosphate from D-erythrose 4-phosphate: step 5/5.</text>
</comment>
<comment type="subunit">
    <text evidence="1">Homooctamer; tetramer of dimers.</text>
</comment>
<comment type="subcellular location">
    <subcellularLocation>
        <location evidence="1">Cytoplasm</location>
    </subcellularLocation>
</comment>
<comment type="similarity">
    <text evidence="1">Belongs to the PNP synthase family.</text>
</comment>
<dbReference type="EC" id="2.6.99.2" evidence="1"/>
<dbReference type="EMBL" id="CT971583">
    <property type="protein sequence ID" value="CAK23797.1"/>
    <property type="molecule type" value="Genomic_DNA"/>
</dbReference>
<dbReference type="SMR" id="A5GLI2"/>
<dbReference type="STRING" id="32051.SynWH7803_1371"/>
<dbReference type="KEGG" id="syx:SynWH7803_1371"/>
<dbReference type="eggNOG" id="COG0854">
    <property type="taxonomic scope" value="Bacteria"/>
</dbReference>
<dbReference type="HOGENOM" id="CLU_074563_0_0_3"/>
<dbReference type="OrthoDB" id="9806590at2"/>
<dbReference type="UniPathway" id="UPA00244">
    <property type="reaction ID" value="UER00313"/>
</dbReference>
<dbReference type="Proteomes" id="UP000001566">
    <property type="component" value="Chromosome"/>
</dbReference>
<dbReference type="GO" id="GO:0005829">
    <property type="term" value="C:cytosol"/>
    <property type="evidence" value="ECO:0007669"/>
    <property type="project" value="TreeGrafter"/>
</dbReference>
<dbReference type="GO" id="GO:0033856">
    <property type="term" value="F:pyridoxine 5'-phosphate synthase activity"/>
    <property type="evidence" value="ECO:0007669"/>
    <property type="project" value="UniProtKB-EC"/>
</dbReference>
<dbReference type="GO" id="GO:0008615">
    <property type="term" value="P:pyridoxine biosynthetic process"/>
    <property type="evidence" value="ECO:0007669"/>
    <property type="project" value="UniProtKB-UniRule"/>
</dbReference>
<dbReference type="CDD" id="cd00003">
    <property type="entry name" value="PNPsynthase"/>
    <property type="match status" value="1"/>
</dbReference>
<dbReference type="Gene3D" id="3.20.20.70">
    <property type="entry name" value="Aldolase class I"/>
    <property type="match status" value="1"/>
</dbReference>
<dbReference type="HAMAP" id="MF_00279">
    <property type="entry name" value="PdxJ"/>
    <property type="match status" value="1"/>
</dbReference>
<dbReference type="InterPro" id="IPR013785">
    <property type="entry name" value="Aldolase_TIM"/>
</dbReference>
<dbReference type="InterPro" id="IPR004569">
    <property type="entry name" value="PyrdxlP_synth_PdxJ"/>
</dbReference>
<dbReference type="InterPro" id="IPR036130">
    <property type="entry name" value="Pyridoxine-5'_phos_synth"/>
</dbReference>
<dbReference type="NCBIfam" id="TIGR00559">
    <property type="entry name" value="pdxJ"/>
    <property type="match status" value="1"/>
</dbReference>
<dbReference type="NCBIfam" id="NF003625">
    <property type="entry name" value="PRK05265.1-3"/>
    <property type="match status" value="1"/>
</dbReference>
<dbReference type="NCBIfam" id="NF003627">
    <property type="entry name" value="PRK05265.1-5"/>
    <property type="match status" value="1"/>
</dbReference>
<dbReference type="PANTHER" id="PTHR30456">
    <property type="entry name" value="PYRIDOXINE 5'-PHOSPHATE SYNTHASE"/>
    <property type="match status" value="1"/>
</dbReference>
<dbReference type="PANTHER" id="PTHR30456:SF0">
    <property type="entry name" value="PYRIDOXINE 5'-PHOSPHATE SYNTHASE"/>
    <property type="match status" value="1"/>
</dbReference>
<dbReference type="Pfam" id="PF03740">
    <property type="entry name" value="PdxJ"/>
    <property type="match status" value="1"/>
</dbReference>
<dbReference type="SUPFAM" id="SSF63892">
    <property type="entry name" value="Pyridoxine 5'-phosphate synthase"/>
    <property type="match status" value="1"/>
</dbReference>
<name>PDXJ_SYNPW</name>
<proteinExistence type="inferred from homology"/>
<keyword id="KW-0963">Cytoplasm</keyword>
<keyword id="KW-0664">Pyridoxine biosynthesis</keyword>
<keyword id="KW-1185">Reference proteome</keyword>
<keyword id="KW-0808">Transferase</keyword>
<accession>A5GLI2</accession>
<gene>
    <name evidence="1" type="primary">pdxJ</name>
    <name type="ordered locus">SynWH7803_1371</name>
</gene>
<reference key="1">
    <citation type="submission" date="2006-05" db="EMBL/GenBank/DDBJ databases">
        <authorList>
            <consortium name="Genoscope"/>
        </authorList>
    </citation>
    <scope>NUCLEOTIDE SEQUENCE [LARGE SCALE GENOMIC DNA]</scope>
    <source>
        <strain>WH7803</strain>
    </source>
</reference>
<organism>
    <name type="scientific">Synechococcus sp. (strain WH7803)</name>
    <dbReference type="NCBI Taxonomy" id="32051"/>
    <lineage>
        <taxon>Bacteria</taxon>
        <taxon>Bacillati</taxon>
        <taxon>Cyanobacteriota</taxon>
        <taxon>Cyanophyceae</taxon>
        <taxon>Synechococcales</taxon>
        <taxon>Synechococcaceae</taxon>
        <taxon>Synechococcus</taxon>
    </lineage>
</organism>
<sequence length="247" mass="27324">MASLGVNIDHIANVRQARRTVEPDPVPMALLAELGGADGITVHLREDRRHIQDRDVDLLRQTVRSRLNLEMAATEDMVLIALRVQPDMVTLVPERREEVTTEGGLDVSSQRVDLTSKISRLQDAGIPVSLFVDPERGQLEACRDCRARWVELHTGTYAEAKWTDQPSELARLTEATALARAMGLRVNAGHGLTYQNVEPVAAIEGMEELNIGHTIVARAVAVGLQQAVREMKALVQNPRRDPLFGSY</sequence>
<feature type="chain" id="PRO_1000022408" description="Pyridoxine 5'-phosphate synthase">
    <location>
        <begin position="1"/>
        <end position="247"/>
    </location>
</feature>
<feature type="active site" description="Proton acceptor" evidence="1">
    <location>
        <position position="43"/>
    </location>
</feature>
<feature type="active site" description="Proton acceptor" evidence="1">
    <location>
        <position position="70"/>
    </location>
</feature>
<feature type="active site" description="Proton donor" evidence="1">
    <location>
        <position position="190"/>
    </location>
</feature>
<feature type="binding site" evidence="1">
    <location>
        <position position="7"/>
    </location>
    <ligand>
        <name>3-amino-2-oxopropyl phosphate</name>
        <dbReference type="ChEBI" id="CHEBI:57279"/>
    </ligand>
</feature>
<feature type="binding site" evidence="1">
    <location>
        <begin position="9"/>
        <end position="10"/>
    </location>
    <ligand>
        <name>1-deoxy-D-xylulose 5-phosphate</name>
        <dbReference type="ChEBI" id="CHEBI:57792"/>
    </ligand>
</feature>
<feature type="binding site" evidence="1">
    <location>
        <position position="18"/>
    </location>
    <ligand>
        <name>3-amino-2-oxopropyl phosphate</name>
        <dbReference type="ChEBI" id="CHEBI:57279"/>
    </ligand>
</feature>
<feature type="binding site" evidence="1">
    <location>
        <position position="45"/>
    </location>
    <ligand>
        <name>1-deoxy-D-xylulose 5-phosphate</name>
        <dbReference type="ChEBI" id="CHEBI:57792"/>
    </ligand>
</feature>
<feature type="binding site" evidence="1">
    <location>
        <position position="50"/>
    </location>
    <ligand>
        <name>1-deoxy-D-xylulose 5-phosphate</name>
        <dbReference type="ChEBI" id="CHEBI:57792"/>
    </ligand>
</feature>
<feature type="binding site" evidence="1">
    <location>
        <position position="100"/>
    </location>
    <ligand>
        <name>1-deoxy-D-xylulose 5-phosphate</name>
        <dbReference type="ChEBI" id="CHEBI:57792"/>
    </ligand>
</feature>
<feature type="binding site" evidence="1">
    <location>
        <position position="191"/>
    </location>
    <ligand>
        <name>3-amino-2-oxopropyl phosphate</name>
        <dbReference type="ChEBI" id="CHEBI:57279"/>
    </ligand>
</feature>
<feature type="binding site" evidence="1">
    <location>
        <begin position="212"/>
        <end position="213"/>
    </location>
    <ligand>
        <name>3-amino-2-oxopropyl phosphate</name>
        <dbReference type="ChEBI" id="CHEBI:57279"/>
    </ligand>
</feature>
<feature type="site" description="Transition state stabilizer" evidence="1">
    <location>
        <position position="151"/>
    </location>
</feature>